<sequence>MVYPEEPFWVLPTVTGFYEDRDYRVNVVEALQEFWQMKQSRGAELKNGALVIYESIPSNSQPYICFVTLPGGSCFGSFQNCPTKAEARRSSAKIALMNSVFNEHPSRRISDEFIQKAVQDARTSFKGTSQINEGTESGIGAFRFMLEANKGRTMLEFQELMTVFQLLHWNGSLKAMRERHCSRQEVVAHYSNRSLDDEMRSQMALDWIAREHDNPGVIRRELVLAERELETFRMAGRELRFPKEKKDILMIAHNQLGGSALNSATIDD</sequence>
<comment type="function">
    <text evidence="1 2">Component of the Fat (ft) signaling pathway that functions in normal development of various organs such as the wing and leg (PubMed:19710173, PubMed:21379328). In developing imaginal disks, involved in regulating both the protein levels and apical localization of ft and ds (PubMed:19710173). Involved in establishing planar cell polarity (PCP) along the anterior-posterior axis of the wing (the early Fz signaling event), probably by acting upstream of ds and ft to regulate Fz activity (PubMed:21379328).</text>
</comment>
<comment type="subunit">
    <text evidence="1">Interacts with ft (via intracellular domain) and ds (via intracellular domain).</text>
</comment>
<comment type="subcellular location">
    <subcellularLocation>
        <location evidence="1">Apical cell membrane</location>
        <topology evidence="1">Peripheral membrane protein</topology>
    </subcellularLocation>
    <subcellularLocation>
        <location evidence="1">Cytoplasm</location>
    </subcellularLocation>
    <text evidence="1">In wing imaginal disks, strong cytoplasmic expression in the wing pouch but in regions of the wing hinge preferentially expressed in the sub-apical membrane.</text>
</comment>
<comment type="developmental stage">
    <text evidence="1">Broadly expressed in the developing imaginal disks including the wing, leg and eye, and the neuroepithelium of the optic lobes of the brain. In the eye imaginal disk, expression is highest in the morphogenetic furrow and in the wing imaginal disk it is highest near the dorsal-ventral (DV) compartment boundary.</text>
</comment>
<comment type="disruption phenotype">
    <text evidence="1">Viable and fertile. Wings are slightly shorter with a decreased distance between cross-veins.</text>
</comment>
<comment type="similarity">
    <text evidence="4">Belongs to the LIX1 family.</text>
</comment>
<name>LIX1_DROME</name>
<accession>Q9VKY1</accession>
<dbReference type="EMBL" id="AE014134">
    <property type="protein sequence ID" value="AAF52926.1"/>
    <property type="molecule type" value="Genomic_DNA"/>
</dbReference>
<dbReference type="EMBL" id="AE014134">
    <property type="protein sequence ID" value="ADV37025.1"/>
    <property type="molecule type" value="Genomic_DNA"/>
</dbReference>
<dbReference type="EMBL" id="BT024350">
    <property type="protein sequence ID" value="ABC86412.1"/>
    <property type="molecule type" value="mRNA"/>
</dbReference>
<dbReference type="RefSeq" id="NP_001188775.1">
    <property type="nucleotide sequence ID" value="NM_001201846.2"/>
</dbReference>
<dbReference type="RefSeq" id="NP_609390.1">
    <property type="nucleotide sequence ID" value="NM_135546.3"/>
</dbReference>
<dbReference type="FunCoup" id="Q9VKY1">
    <property type="interactions" value="131"/>
</dbReference>
<dbReference type="IntAct" id="Q9VKY1">
    <property type="interactions" value="4"/>
</dbReference>
<dbReference type="STRING" id="7227.FBpp0291652"/>
<dbReference type="PaxDb" id="7227-FBpp0079592"/>
<dbReference type="DNASU" id="34405"/>
<dbReference type="EnsemblMetazoa" id="FBtr0080002">
    <property type="protein sequence ID" value="FBpp0079592"/>
    <property type="gene ID" value="FBgn0032230"/>
</dbReference>
<dbReference type="EnsemblMetazoa" id="FBtr0302490">
    <property type="protein sequence ID" value="FBpp0291652"/>
    <property type="gene ID" value="FBgn0032230"/>
</dbReference>
<dbReference type="GeneID" id="34405"/>
<dbReference type="KEGG" id="dme:Dmel_CG13139"/>
<dbReference type="UCSC" id="CG13139-RA">
    <property type="organism name" value="d. melanogaster"/>
</dbReference>
<dbReference type="AGR" id="FB:FBgn0032230"/>
<dbReference type="CTD" id="34405"/>
<dbReference type="FlyBase" id="FBgn0032230">
    <property type="gene designation" value="lft"/>
</dbReference>
<dbReference type="VEuPathDB" id="VectorBase:FBgn0032230"/>
<dbReference type="eggNOG" id="ENOG502QR91">
    <property type="taxonomic scope" value="Eukaryota"/>
</dbReference>
<dbReference type="GeneTree" id="ENSGT00390000005869"/>
<dbReference type="HOGENOM" id="CLU_065651_0_1_1"/>
<dbReference type="InParanoid" id="Q9VKY1"/>
<dbReference type="OMA" id="DWVAREH"/>
<dbReference type="OrthoDB" id="6250996at2759"/>
<dbReference type="PhylomeDB" id="Q9VKY1"/>
<dbReference type="Reactome" id="R-DME-390150">
    <property type="pathway name" value="DS ligand bound to FT receptor"/>
</dbReference>
<dbReference type="BioGRID-ORCS" id="34405">
    <property type="hits" value="0 hits in 3 CRISPR screens"/>
</dbReference>
<dbReference type="GenomeRNAi" id="34405"/>
<dbReference type="PRO" id="PR:Q9VKY1"/>
<dbReference type="Proteomes" id="UP000000803">
    <property type="component" value="Chromosome 2L"/>
</dbReference>
<dbReference type="Bgee" id="FBgn0032230">
    <property type="expression patterns" value="Expressed in adult tracheocyte (Drosophila) in open tracheal system trachea and 57 other cell types or tissues"/>
</dbReference>
<dbReference type="GO" id="GO:0016324">
    <property type="term" value="C:apical plasma membrane"/>
    <property type="evidence" value="ECO:0007669"/>
    <property type="project" value="UniProtKB-SubCell"/>
</dbReference>
<dbReference type="GO" id="GO:0005737">
    <property type="term" value="C:cytoplasm"/>
    <property type="evidence" value="ECO:0000314"/>
    <property type="project" value="FlyBase"/>
</dbReference>
<dbReference type="GO" id="GO:0005829">
    <property type="term" value="C:cytosol"/>
    <property type="evidence" value="ECO:0000304"/>
    <property type="project" value="Reactome"/>
</dbReference>
<dbReference type="GO" id="GO:0035003">
    <property type="term" value="C:subapical complex"/>
    <property type="evidence" value="ECO:0000314"/>
    <property type="project" value="FlyBase"/>
</dbReference>
<dbReference type="GO" id="GO:0097352">
    <property type="term" value="P:autophagosome maturation"/>
    <property type="evidence" value="ECO:0000318"/>
    <property type="project" value="GO_Central"/>
</dbReference>
<dbReference type="GO" id="GO:0007476">
    <property type="term" value="P:imaginal disc-derived wing morphogenesis"/>
    <property type="evidence" value="ECO:0000315"/>
    <property type="project" value="FlyBase"/>
</dbReference>
<dbReference type="InterPro" id="IPR051436">
    <property type="entry name" value="Autophagy-related_EPG5"/>
</dbReference>
<dbReference type="InterPro" id="IPR029270">
    <property type="entry name" value="LIX1"/>
</dbReference>
<dbReference type="PANTHER" id="PTHR31139">
    <property type="entry name" value="ECTOPIC P GRANULES PROTEIN 5 HOMOLOG"/>
    <property type="match status" value="1"/>
</dbReference>
<dbReference type="PANTHER" id="PTHR31139:SF6">
    <property type="entry name" value="PROTEIN LIMB EXPRESSION 1 HOMOLOG"/>
    <property type="match status" value="1"/>
</dbReference>
<dbReference type="Pfam" id="PF14954">
    <property type="entry name" value="LIX1"/>
    <property type="match status" value="1"/>
</dbReference>
<evidence type="ECO:0000269" key="1">
    <source>
    </source>
</evidence>
<evidence type="ECO:0000269" key="2">
    <source>
    </source>
</evidence>
<evidence type="ECO:0000303" key="3">
    <source>
    </source>
</evidence>
<evidence type="ECO:0000305" key="4"/>
<evidence type="ECO:0000312" key="5">
    <source>
        <dbReference type="EMBL" id="ABC86412.1"/>
    </source>
</evidence>
<evidence type="ECO:0000312" key="6">
    <source>
        <dbReference type="FlyBase" id="FBgn0032230"/>
    </source>
</evidence>
<evidence type="ECO:0000312" key="7">
    <source>
        <dbReference type="Proteomes" id="UP000000803"/>
    </source>
</evidence>
<keyword id="KW-1003">Cell membrane</keyword>
<keyword id="KW-0963">Cytoplasm</keyword>
<keyword id="KW-0472">Membrane</keyword>
<keyword id="KW-1185">Reference proteome</keyword>
<gene>
    <name evidence="6" type="primary">lft</name>
    <name evidence="6" type="ORF">CG13139</name>
</gene>
<protein>
    <recommendedName>
        <fullName evidence="3">Protein limb expression 1 homolog</fullName>
    </recommendedName>
    <alternativeName>
        <fullName evidence="3">lowfat</fullName>
    </alternativeName>
</protein>
<feature type="chain" id="PRO_0000438291" description="Protein limb expression 1 homolog">
    <location>
        <begin position="1"/>
        <end position="268"/>
    </location>
</feature>
<reference evidence="7" key="1">
    <citation type="journal article" date="2000" name="Science">
        <title>The genome sequence of Drosophila melanogaster.</title>
        <authorList>
            <person name="Adams M.D."/>
            <person name="Celniker S.E."/>
            <person name="Holt R.A."/>
            <person name="Evans C.A."/>
            <person name="Gocayne J.D."/>
            <person name="Amanatides P.G."/>
            <person name="Scherer S.E."/>
            <person name="Li P.W."/>
            <person name="Hoskins R.A."/>
            <person name="Galle R.F."/>
            <person name="George R.A."/>
            <person name="Lewis S.E."/>
            <person name="Richards S."/>
            <person name="Ashburner M."/>
            <person name="Henderson S.N."/>
            <person name="Sutton G.G."/>
            <person name="Wortman J.R."/>
            <person name="Yandell M.D."/>
            <person name="Zhang Q."/>
            <person name="Chen L.X."/>
            <person name="Brandon R.C."/>
            <person name="Rogers Y.-H.C."/>
            <person name="Blazej R.G."/>
            <person name="Champe M."/>
            <person name="Pfeiffer B.D."/>
            <person name="Wan K.H."/>
            <person name="Doyle C."/>
            <person name="Baxter E.G."/>
            <person name="Helt G."/>
            <person name="Nelson C.R."/>
            <person name="Miklos G.L.G."/>
            <person name="Abril J.F."/>
            <person name="Agbayani A."/>
            <person name="An H.-J."/>
            <person name="Andrews-Pfannkoch C."/>
            <person name="Baldwin D."/>
            <person name="Ballew R.M."/>
            <person name="Basu A."/>
            <person name="Baxendale J."/>
            <person name="Bayraktaroglu L."/>
            <person name="Beasley E.M."/>
            <person name="Beeson K.Y."/>
            <person name="Benos P.V."/>
            <person name="Berman B.P."/>
            <person name="Bhandari D."/>
            <person name="Bolshakov S."/>
            <person name="Borkova D."/>
            <person name="Botchan M.R."/>
            <person name="Bouck J."/>
            <person name="Brokstein P."/>
            <person name="Brottier P."/>
            <person name="Burtis K.C."/>
            <person name="Busam D.A."/>
            <person name="Butler H."/>
            <person name="Cadieu E."/>
            <person name="Center A."/>
            <person name="Chandra I."/>
            <person name="Cherry J.M."/>
            <person name="Cawley S."/>
            <person name="Dahlke C."/>
            <person name="Davenport L.B."/>
            <person name="Davies P."/>
            <person name="de Pablos B."/>
            <person name="Delcher A."/>
            <person name="Deng Z."/>
            <person name="Mays A.D."/>
            <person name="Dew I."/>
            <person name="Dietz S.M."/>
            <person name="Dodson K."/>
            <person name="Doup L.E."/>
            <person name="Downes M."/>
            <person name="Dugan-Rocha S."/>
            <person name="Dunkov B.C."/>
            <person name="Dunn P."/>
            <person name="Durbin K.J."/>
            <person name="Evangelista C.C."/>
            <person name="Ferraz C."/>
            <person name="Ferriera S."/>
            <person name="Fleischmann W."/>
            <person name="Fosler C."/>
            <person name="Gabrielian A.E."/>
            <person name="Garg N.S."/>
            <person name="Gelbart W.M."/>
            <person name="Glasser K."/>
            <person name="Glodek A."/>
            <person name="Gong F."/>
            <person name="Gorrell J.H."/>
            <person name="Gu Z."/>
            <person name="Guan P."/>
            <person name="Harris M."/>
            <person name="Harris N.L."/>
            <person name="Harvey D.A."/>
            <person name="Heiman T.J."/>
            <person name="Hernandez J.R."/>
            <person name="Houck J."/>
            <person name="Hostin D."/>
            <person name="Houston K.A."/>
            <person name="Howland T.J."/>
            <person name="Wei M.-H."/>
            <person name="Ibegwam C."/>
            <person name="Jalali M."/>
            <person name="Kalush F."/>
            <person name="Karpen G.H."/>
            <person name="Ke Z."/>
            <person name="Kennison J.A."/>
            <person name="Ketchum K.A."/>
            <person name="Kimmel B.E."/>
            <person name="Kodira C.D."/>
            <person name="Kraft C.L."/>
            <person name="Kravitz S."/>
            <person name="Kulp D."/>
            <person name="Lai Z."/>
            <person name="Lasko P."/>
            <person name="Lei Y."/>
            <person name="Levitsky A.A."/>
            <person name="Li J.H."/>
            <person name="Li Z."/>
            <person name="Liang Y."/>
            <person name="Lin X."/>
            <person name="Liu X."/>
            <person name="Mattei B."/>
            <person name="McIntosh T.C."/>
            <person name="McLeod M.P."/>
            <person name="McPherson D."/>
            <person name="Merkulov G."/>
            <person name="Milshina N.V."/>
            <person name="Mobarry C."/>
            <person name="Morris J."/>
            <person name="Moshrefi A."/>
            <person name="Mount S.M."/>
            <person name="Moy M."/>
            <person name="Murphy B."/>
            <person name="Murphy L."/>
            <person name="Muzny D.M."/>
            <person name="Nelson D.L."/>
            <person name="Nelson D.R."/>
            <person name="Nelson K.A."/>
            <person name="Nixon K."/>
            <person name="Nusskern D.R."/>
            <person name="Pacleb J.M."/>
            <person name="Palazzolo M."/>
            <person name="Pittman G.S."/>
            <person name="Pan S."/>
            <person name="Pollard J."/>
            <person name="Puri V."/>
            <person name="Reese M.G."/>
            <person name="Reinert K."/>
            <person name="Remington K."/>
            <person name="Saunders R.D.C."/>
            <person name="Scheeler F."/>
            <person name="Shen H."/>
            <person name="Shue B.C."/>
            <person name="Siden-Kiamos I."/>
            <person name="Simpson M."/>
            <person name="Skupski M.P."/>
            <person name="Smith T.J."/>
            <person name="Spier E."/>
            <person name="Spradling A.C."/>
            <person name="Stapleton M."/>
            <person name="Strong R."/>
            <person name="Sun E."/>
            <person name="Svirskas R."/>
            <person name="Tector C."/>
            <person name="Turner R."/>
            <person name="Venter E."/>
            <person name="Wang A.H."/>
            <person name="Wang X."/>
            <person name="Wang Z.-Y."/>
            <person name="Wassarman D.A."/>
            <person name="Weinstock G.M."/>
            <person name="Weissenbach J."/>
            <person name="Williams S.M."/>
            <person name="Woodage T."/>
            <person name="Worley K.C."/>
            <person name="Wu D."/>
            <person name="Yang S."/>
            <person name="Yao Q.A."/>
            <person name="Ye J."/>
            <person name="Yeh R.-F."/>
            <person name="Zaveri J.S."/>
            <person name="Zhan M."/>
            <person name="Zhang G."/>
            <person name="Zhao Q."/>
            <person name="Zheng L."/>
            <person name="Zheng X.H."/>
            <person name="Zhong F.N."/>
            <person name="Zhong W."/>
            <person name="Zhou X."/>
            <person name="Zhu S.C."/>
            <person name="Zhu X."/>
            <person name="Smith H.O."/>
            <person name="Gibbs R.A."/>
            <person name="Myers E.W."/>
            <person name="Rubin G.M."/>
            <person name="Venter J.C."/>
        </authorList>
    </citation>
    <scope>NUCLEOTIDE SEQUENCE [LARGE SCALE GENOMIC DNA]</scope>
    <source>
        <strain>Berkeley</strain>
    </source>
</reference>
<reference evidence="7" key="2">
    <citation type="journal article" date="2002" name="Genome Biol.">
        <title>Annotation of the Drosophila melanogaster euchromatic genome: a systematic review.</title>
        <authorList>
            <person name="Misra S."/>
            <person name="Crosby M.A."/>
            <person name="Mungall C.J."/>
            <person name="Matthews B.B."/>
            <person name="Campbell K.S."/>
            <person name="Hradecky P."/>
            <person name="Huang Y."/>
            <person name="Kaminker J.S."/>
            <person name="Millburn G.H."/>
            <person name="Prochnik S.E."/>
            <person name="Smith C.D."/>
            <person name="Tupy J.L."/>
            <person name="Whitfield E.J."/>
            <person name="Bayraktaroglu L."/>
            <person name="Berman B.P."/>
            <person name="Bettencourt B.R."/>
            <person name="Celniker S.E."/>
            <person name="de Grey A.D.N.J."/>
            <person name="Drysdale R.A."/>
            <person name="Harris N.L."/>
            <person name="Richter J."/>
            <person name="Russo S."/>
            <person name="Schroeder A.J."/>
            <person name="Shu S.Q."/>
            <person name="Stapleton M."/>
            <person name="Yamada C."/>
            <person name="Ashburner M."/>
            <person name="Gelbart W.M."/>
            <person name="Rubin G.M."/>
            <person name="Lewis S.E."/>
        </authorList>
    </citation>
    <scope>GENOME REANNOTATION</scope>
    <source>
        <strain>Berkeley</strain>
    </source>
</reference>
<reference evidence="5" key="3">
    <citation type="submission" date="2006-01" db="EMBL/GenBank/DDBJ databases">
        <authorList>
            <person name="Stapleton M."/>
            <person name="Carlson J."/>
            <person name="Chavez C."/>
            <person name="Frise E."/>
            <person name="George R."/>
            <person name="Pacleb J."/>
            <person name="Park S."/>
            <person name="Wan K."/>
            <person name="Yu C."/>
            <person name="Celniker S."/>
        </authorList>
    </citation>
    <scope>NUCLEOTIDE SEQUENCE [LARGE SCALE MRNA]</scope>
    <source>
        <strain evidence="5">Berkeley</strain>
    </source>
</reference>
<reference evidence="4" key="4">
    <citation type="journal article" date="2009" name="Development">
        <title>Drosophila lowfat, a novel modulator of Fat signaling.</title>
        <authorList>
            <person name="Mao Y."/>
            <person name="Kucuk B."/>
            <person name="Irvine K.D."/>
        </authorList>
    </citation>
    <scope>FUNCTION</scope>
    <scope>INTERACTION WITH DS AND FT</scope>
    <scope>SUBCELLULAR LOCATION</scope>
    <scope>DEVELOPMENTAL STAGE</scope>
    <scope>DISRUPTION PHENOTYPE</scope>
</reference>
<reference evidence="4" key="5">
    <citation type="journal article" date="2011" name="PLoS Genet.">
        <title>Two frizzled planar cell polarity signals in the Drosophila wing are differentially organized by the Fat/Dachsous pathway.</title>
        <authorList>
            <person name="Hogan J."/>
            <person name="Valentine M."/>
            <person name="Cox C."/>
            <person name="Doyle K."/>
            <person name="Collier S."/>
        </authorList>
    </citation>
    <scope>FUNCTION</scope>
</reference>
<organism evidence="7">
    <name type="scientific">Drosophila melanogaster</name>
    <name type="common">Fruit fly</name>
    <dbReference type="NCBI Taxonomy" id="7227"/>
    <lineage>
        <taxon>Eukaryota</taxon>
        <taxon>Metazoa</taxon>
        <taxon>Ecdysozoa</taxon>
        <taxon>Arthropoda</taxon>
        <taxon>Hexapoda</taxon>
        <taxon>Insecta</taxon>
        <taxon>Pterygota</taxon>
        <taxon>Neoptera</taxon>
        <taxon>Endopterygota</taxon>
        <taxon>Diptera</taxon>
        <taxon>Brachycera</taxon>
        <taxon>Muscomorpha</taxon>
        <taxon>Ephydroidea</taxon>
        <taxon>Drosophilidae</taxon>
        <taxon>Drosophila</taxon>
        <taxon>Sophophora</taxon>
    </lineage>
</organism>
<proteinExistence type="evidence at protein level"/>